<dbReference type="EC" id="6.3.4.21" evidence="2"/>
<dbReference type="EMBL" id="AL513382">
    <property type="protein sequence ID" value="CAD05404.1"/>
    <property type="molecule type" value="Genomic_DNA"/>
</dbReference>
<dbReference type="EMBL" id="AE014613">
    <property type="protein sequence ID" value="AAO69546.1"/>
    <property type="molecule type" value="Genomic_DNA"/>
</dbReference>
<dbReference type="RefSeq" id="NP_455489.1">
    <property type="nucleotide sequence ID" value="NC_003198.1"/>
</dbReference>
<dbReference type="RefSeq" id="WP_000191411.1">
    <property type="nucleotide sequence ID" value="NZ_WSUR01000013.1"/>
</dbReference>
<dbReference type="SMR" id="Q8Z7Y9"/>
<dbReference type="STRING" id="220341.gene:17584995"/>
<dbReference type="KEGG" id="stt:t1930"/>
<dbReference type="KEGG" id="sty:STY1010"/>
<dbReference type="PATRIC" id="fig|220341.7.peg.1019"/>
<dbReference type="eggNOG" id="COG1488">
    <property type="taxonomic scope" value="Bacteria"/>
</dbReference>
<dbReference type="HOGENOM" id="CLU_030991_1_0_6"/>
<dbReference type="OMA" id="IEHCLEY"/>
<dbReference type="OrthoDB" id="9771406at2"/>
<dbReference type="UniPathway" id="UPA00253">
    <property type="reaction ID" value="UER00457"/>
</dbReference>
<dbReference type="Proteomes" id="UP000000541">
    <property type="component" value="Chromosome"/>
</dbReference>
<dbReference type="Proteomes" id="UP000002670">
    <property type="component" value="Chromosome"/>
</dbReference>
<dbReference type="GO" id="GO:0005829">
    <property type="term" value="C:cytosol"/>
    <property type="evidence" value="ECO:0007669"/>
    <property type="project" value="TreeGrafter"/>
</dbReference>
<dbReference type="GO" id="GO:0004516">
    <property type="term" value="F:nicotinate phosphoribosyltransferase activity"/>
    <property type="evidence" value="ECO:0007669"/>
    <property type="project" value="UniProtKB-UniRule"/>
</dbReference>
<dbReference type="GO" id="GO:0034355">
    <property type="term" value="P:NAD biosynthetic process via the salvage pathway"/>
    <property type="evidence" value="ECO:0007669"/>
    <property type="project" value="TreeGrafter"/>
</dbReference>
<dbReference type="CDD" id="cd01401">
    <property type="entry name" value="PncB_like"/>
    <property type="match status" value="1"/>
</dbReference>
<dbReference type="FunFam" id="3.20.140.10:FF:000001">
    <property type="entry name" value="Nicotinate phosphoribosyltransferase"/>
    <property type="match status" value="1"/>
</dbReference>
<dbReference type="Gene3D" id="3.20.140.10">
    <property type="entry name" value="nicotinate phosphoribosyltransferase"/>
    <property type="match status" value="1"/>
</dbReference>
<dbReference type="HAMAP" id="MF_00570">
    <property type="entry name" value="NAPRTase"/>
    <property type="match status" value="1"/>
</dbReference>
<dbReference type="InterPro" id="IPR041525">
    <property type="entry name" value="N/Namide_PRibTrfase"/>
</dbReference>
<dbReference type="InterPro" id="IPR040727">
    <property type="entry name" value="NAPRTase_N"/>
</dbReference>
<dbReference type="InterPro" id="IPR006406">
    <property type="entry name" value="Nic_PRibTrfase"/>
</dbReference>
<dbReference type="InterPro" id="IPR007229">
    <property type="entry name" value="Nic_PRibTrfase-Fam"/>
</dbReference>
<dbReference type="InterPro" id="IPR036068">
    <property type="entry name" value="Nicotinate_pribotase-like_C"/>
</dbReference>
<dbReference type="NCBIfam" id="TIGR01514">
    <property type="entry name" value="NAPRTase"/>
    <property type="match status" value="1"/>
</dbReference>
<dbReference type="NCBIfam" id="NF003704">
    <property type="entry name" value="PRK05321.1"/>
    <property type="match status" value="1"/>
</dbReference>
<dbReference type="PANTHER" id="PTHR11098">
    <property type="entry name" value="NICOTINATE PHOSPHORIBOSYLTRANSFERASE"/>
    <property type="match status" value="1"/>
</dbReference>
<dbReference type="PANTHER" id="PTHR11098:SF1">
    <property type="entry name" value="NICOTINATE PHOSPHORIBOSYLTRANSFERASE"/>
    <property type="match status" value="1"/>
</dbReference>
<dbReference type="Pfam" id="PF04095">
    <property type="entry name" value="NAPRTase"/>
    <property type="match status" value="1"/>
</dbReference>
<dbReference type="Pfam" id="PF17767">
    <property type="entry name" value="NAPRTase_N"/>
    <property type="match status" value="1"/>
</dbReference>
<dbReference type="PIRSF" id="PIRSF000484">
    <property type="entry name" value="NAPRT"/>
    <property type="match status" value="1"/>
</dbReference>
<dbReference type="SUPFAM" id="SSF51690">
    <property type="entry name" value="Nicotinate/Quinolinate PRTase C-terminal domain-like"/>
    <property type="match status" value="1"/>
</dbReference>
<dbReference type="SUPFAM" id="SSF54675">
    <property type="entry name" value="Nicotinate/Quinolinate PRTase N-terminal domain-like"/>
    <property type="match status" value="1"/>
</dbReference>
<gene>
    <name evidence="2" type="primary">pncB</name>
    <name type="ordered locus">STY1010</name>
    <name type="ordered locus">t1930</name>
</gene>
<sequence length="400" mass="45693">MTQFASPVLHSLLDTDAYKLHMQQAVFHHYYDVQVAAEFRCRGDDLLGIYADAIREQVDAMQHLRLQEDEFQWLSGLPFFKPDYLNWLREFRYNPAQVCVTNDNGKLNIRLTGSWREVIMWEVPLLAVISELVHHYRSPNAGVDQALDALESKLVDFTALTANLDMSRFHLMDFGTRRRFSREVQQAIVKRLQQESWFVGTSNYDLARRLALTPMGTQAHEWFQAHQQINPDLATSQRAALAAWLNEYPDQLGIALTDCITMDAFLRDFGIEFASRYQGLRHDSGDPVAWGEKAIAHYEKLGIDPLTKTLVFSDNLDLPKAVELYRHFASRVQLSFGIGTRLTCDIPQVKPLNIVIKLVECNGKPVAKLSDSPGKTICHDKAFVRALRKAFDLPQVRKAS</sequence>
<reference key="1">
    <citation type="journal article" date="2001" name="Nature">
        <title>Complete genome sequence of a multiple drug resistant Salmonella enterica serovar Typhi CT18.</title>
        <authorList>
            <person name="Parkhill J."/>
            <person name="Dougan G."/>
            <person name="James K.D."/>
            <person name="Thomson N.R."/>
            <person name="Pickard D."/>
            <person name="Wain J."/>
            <person name="Churcher C.M."/>
            <person name="Mungall K.L."/>
            <person name="Bentley S.D."/>
            <person name="Holden M.T.G."/>
            <person name="Sebaihia M."/>
            <person name="Baker S."/>
            <person name="Basham D."/>
            <person name="Brooks K."/>
            <person name="Chillingworth T."/>
            <person name="Connerton P."/>
            <person name="Cronin A."/>
            <person name="Davis P."/>
            <person name="Davies R.M."/>
            <person name="Dowd L."/>
            <person name="White N."/>
            <person name="Farrar J."/>
            <person name="Feltwell T."/>
            <person name="Hamlin N."/>
            <person name="Haque A."/>
            <person name="Hien T.T."/>
            <person name="Holroyd S."/>
            <person name="Jagels K."/>
            <person name="Krogh A."/>
            <person name="Larsen T.S."/>
            <person name="Leather S."/>
            <person name="Moule S."/>
            <person name="O'Gaora P."/>
            <person name="Parry C."/>
            <person name="Quail M.A."/>
            <person name="Rutherford K.M."/>
            <person name="Simmonds M."/>
            <person name="Skelton J."/>
            <person name="Stevens K."/>
            <person name="Whitehead S."/>
            <person name="Barrell B.G."/>
        </authorList>
    </citation>
    <scope>NUCLEOTIDE SEQUENCE [LARGE SCALE GENOMIC DNA]</scope>
    <source>
        <strain>CT18</strain>
    </source>
</reference>
<reference key="2">
    <citation type="journal article" date="2003" name="J. Bacteriol.">
        <title>Comparative genomics of Salmonella enterica serovar Typhi strains Ty2 and CT18.</title>
        <authorList>
            <person name="Deng W."/>
            <person name="Liou S.-R."/>
            <person name="Plunkett G. III"/>
            <person name="Mayhew G.F."/>
            <person name="Rose D.J."/>
            <person name="Burland V."/>
            <person name="Kodoyianni V."/>
            <person name="Schwartz D.C."/>
            <person name="Blattner F.R."/>
        </authorList>
    </citation>
    <scope>NUCLEOTIDE SEQUENCE [LARGE SCALE GENOMIC DNA]</scope>
    <source>
        <strain>ATCC 700931 / Ty2</strain>
    </source>
</reference>
<feature type="initiator methionine" description="Removed" evidence="1">
    <location>
        <position position="1"/>
    </location>
</feature>
<feature type="chain" id="PRO_0000205845" description="Nicotinate phosphoribosyltransferase">
    <location>
        <begin position="2"/>
        <end position="400"/>
    </location>
</feature>
<feature type="modified residue" description="Phosphohistidine; by autocatalysis" evidence="2">
    <location>
        <position position="220"/>
    </location>
</feature>
<proteinExistence type="inferred from homology"/>
<comment type="function">
    <text evidence="2">Catalyzes the synthesis of beta-nicotinate D-ribonucleotide from nicotinate and 5-phospho-D-ribose 1-phosphate at the expense of ATP.</text>
</comment>
<comment type="catalytic activity">
    <reaction evidence="2">
        <text>nicotinate + 5-phospho-alpha-D-ribose 1-diphosphate + ATP + H2O = nicotinate beta-D-ribonucleotide + ADP + phosphate + diphosphate</text>
        <dbReference type="Rhea" id="RHEA:36163"/>
        <dbReference type="ChEBI" id="CHEBI:15377"/>
        <dbReference type="ChEBI" id="CHEBI:30616"/>
        <dbReference type="ChEBI" id="CHEBI:32544"/>
        <dbReference type="ChEBI" id="CHEBI:33019"/>
        <dbReference type="ChEBI" id="CHEBI:43474"/>
        <dbReference type="ChEBI" id="CHEBI:57502"/>
        <dbReference type="ChEBI" id="CHEBI:58017"/>
        <dbReference type="ChEBI" id="CHEBI:456216"/>
        <dbReference type="EC" id="6.3.4.21"/>
    </reaction>
</comment>
<comment type="pathway">
    <text evidence="2">Cofactor biosynthesis; NAD(+) biosynthesis; nicotinate D-ribonucleotide from nicotinate: step 1/1.</text>
</comment>
<comment type="PTM">
    <text evidence="2">Transiently phosphorylated on a His residue during the reaction cycle. Phosphorylation strongly increases the affinity for substrates and increases the rate of nicotinate D-ribonucleotide production. Dephosphorylation regenerates the low-affinity form of the enzyme, leading to product release.</text>
</comment>
<comment type="similarity">
    <text evidence="2">Belongs to the NAPRTase family.</text>
</comment>
<accession>Q8Z7Y9</accession>
<evidence type="ECO:0000250" key="1"/>
<evidence type="ECO:0000255" key="2">
    <source>
        <dbReference type="HAMAP-Rule" id="MF_00570"/>
    </source>
</evidence>
<protein>
    <recommendedName>
        <fullName evidence="2">Nicotinate phosphoribosyltransferase</fullName>
        <shortName evidence="2">NAPRTase</shortName>
        <ecNumber evidence="2">6.3.4.21</ecNumber>
    </recommendedName>
</protein>
<organism>
    <name type="scientific">Salmonella typhi</name>
    <dbReference type="NCBI Taxonomy" id="90370"/>
    <lineage>
        <taxon>Bacteria</taxon>
        <taxon>Pseudomonadati</taxon>
        <taxon>Pseudomonadota</taxon>
        <taxon>Gammaproteobacteria</taxon>
        <taxon>Enterobacterales</taxon>
        <taxon>Enterobacteriaceae</taxon>
        <taxon>Salmonella</taxon>
    </lineage>
</organism>
<keyword id="KW-0436">Ligase</keyword>
<keyword id="KW-0597">Phosphoprotein</keyword>
<keyword id="KW-0662">Pyridine nucleotide biosynthesis</keyword>
<name>PNCB_SALTI</name>